<accession>A7GJ56</accession>
<dbReference type="EMBL" id="CP000728">
    <property type="protein sequence ID" value="ABS39715.1"/>
    <property type="molecule type" value="Genomic_DNA"/>
</dbReference>
<dbReference type="RefSeq" id="WP_003357637.1">
    <property type="nucleotide sequence ID" value="NC_009699.1"/>
</dbReference>
<dbReference type="SMR" id="A7GJ56"/>
<dbReference type="GeneID" id="92940232"/>
<dbReference type="KEGG" id="cbf:CLI_3645"/>
<dbReference type="HOGENOM" id="CLU_131047_2_1_9"/>
<dbReference type="Proteomes" id="UP000002410">
    <property type="component" value="Chromosome"/>
</dbReference>
<dbReference type="GO" id="GO:0022625">
    <property type="term" value="C:cytosolic large ribosomal subunit"/>
    <property type="evidence" value="ECO:0007669"/>
    <property type="project" value="TreeGrafter"/>
</dbReference>
<dbReference type="GO" id="GO:0003735">
    <property type="term" value="F:structural constituent of ribosome"/>
    <property type="evidence" value="ECO:0007669"/>
    <property type="project" value="InterPro"/>
</dbReference>
<dbReference type="GO" id="GO:0006412">
    <property type="term" value="P:translation"/>
    <property type="evidence" value="ECO:0007669"/>
    <property type="project" value="UniProtKB-UniRule"/>
</dbReference>
<dbReference type="CDD" id="cd01658">
    <property type="entry name" value="Ribosomal_L30"/>
    <property type="match status" value="1"/>
</dbReference>
<dbReference type="FunFam" id="3.30.1390.20:FF:000001">
    <property type="entry name" value="50S ribosomal protein L30"/>
    <property type="match status" value="1"/>
</dbReference>
<dbReference type="Gene3D" id="3.30.1390.20">
    <property type="entry name" value="Ribosomal protein L30, ferredoxin-like fold domain"/>
    <property type="match status" value="1"/>
</dbReference>
<dbReference type="HAMAP" id="MF_01371_B">
    <property type="entry name" value="Ribosomal_uL30_B"/>
    <property type="match status" value="1"/>
</dbReference>
<dbReference type="InterPro" id="IPR036919">
    <property type="entry name" value="Ribo_uL30_ferredoxin-like_sf"/>
</dbReference>
<dbReference type="InterPro" id="IPR005996">
    <property type="entry name" value="Ribosomal_uL30_bac-type"/>
</dbReference>
<dbReference type="InterPro" id="IPR016082">
    <property type="entry name" value="Ribosomal_uL30_ferredoxin-like"/>
</dbReference>
<dbReference type="NCBIfam" id="TIGR01308">
    <property type="entry name" value="rpmD_bact"/>
    <property type="match status" value="1"/>
</dbReference>
<dbReference type="PANTHER" id="PTHR15892:SF2">
    <property type="entry name" value="LARGE RIBOSOMAL SUBUNIT PROTEIN UL30M"/>
    <property type="match status" value="1"/>
</dbReference>
<dbReference type="PANTHER" id="PTHR15892">
    <property type="entry name" value="MITOCHONDRIAL RIBOSOMAL PROTEIN L30"/>
    <property type="match status" value="1"/>
</dbReference>
<dbReference type="Pfam" id="PF00327">
    <property type="entry name" value="Ribosomal_L30"/>
    <property type="match status" value="1"/>
</dbReference>
<dbReference type="PIRSF" id="PIRSF002211">
    <property type="entry name" value="Ribosomal_L30_bac-type"/>
    <property type="match status" value="1"/>
</dbReference>
<dbReference type="SUPFAM" id="SSF55129">
    <property type="entry name" value="Ribosomal protein L30p/L7e"/>
    <property type="match status" value="1"/>
</dbReference>
<evidence type="ECO:0000255" key="1">
    <source>
        <dbReference type="HAMAP-Rule" id="MF_01371"/>
    </source>
</evidence>
<evidence type="ECO:0000305" key="2"/>
<comment type="subunit">
    <text evidence="1">Part of the 50S ribosomal subunit.</text>
</comment>
<comment type="similarity">
    <text evidence="1">Belongs to the universal ribosomal protein uL30 family.</text>
</comment>
<reference key="1">
    <citation type="submission" date="2007-06" db="EMBL/GenBank/DDBJ databases">
        <authorList>
            <person name="Brinkac L.M."/>
            <person name="Daugherty S."/>
            <person name="Dodson R.J."/>
            <person name="Madupu R."/>
            <person name="Brown J.L."/>
            <person name="Bruce D."/>
            <person name="Detter C."/>
            <person name="Munk C."/>
            <person name="Smith L.A."/>
            <person name="Smith T.J."/>
            <person name="White O."/>
            <person name="Brettin T.S."/>
        </authorList>
    </citation>
    <scope>NUCLEOTIDE SEQUENCE [LARGE SCALE GENOMIC DNA]</scope>
    <source>
        <strain>Langeland / NCTC 10281 / Type F</strain>
    </source>
</reference>
<sequence length="59" mass="6504">MAKVKITLVKSLIGRKKDQIATVNALGLKKIGNIVEHEETPQISGMIKKVSYLLKVEEA</sequence>
<name>RL30_CLOBL</name>
<keyword id="KW-0687">Ribonucleoprotein</keyword>
<keyword id="KW-0689">Ribosomal protein</keyword>
<feature type="chain" id="PRO_1000056030" description="Large ribosomal subunit protein uL30">
    <location>
        <begin position="1"/>
        <end position="59"/>
    </location>
</feature>
<organism>
    <name type="scientific">Clostridium botulinum (strain Langeland / NCTC 10281 / Type F)</name>
    <dbReference type="NCBI Taxonomy" id="441772"/>
    <lineage>
        <taxon>Bacteria</taxon>
        <taxon>Bacillati</taxon>
        <taxon>Bacillota</taxon>
        <taxon>Clostridia</taxon>
        <taxon>Eubacteriales</taxon>
        <taxon>Clostridiaceae</taxon>
        <taxon>Clostridium</taxon>
    </lineage>
</organism>
<gene>
    <name evidence="1" type="primary">rpmD</name>
    <name type="ordered locus">CLI_3645</name>
</gene>
<proteinExistence type="inferred from homology"/>
<protein>
    <recommendedName>
        <fullName evidence="1">Large ribosomal subunit protein uL30</fullName>
    </recommendedName>
    <alternativeName>
        <fullName evidence="2">50S ribosomal protein L30</fullName>
    </alternativeName>
</protein>